<comment type="function">
    <text evidence="1">With LigD forms a non-homologous end joining (NHEJ) DNA repair enzyme, which repairs dsDNA breaks with reduced fidelity. Binds linear dsDNA with 5'- and 3'- overhangs but not closed circular dsDNA nor ssDNA. Recruits and stimulates the ligase activity of LigD.</text>
</comment>
<comment type="subunit">
    <text evidence="1">Homodimer. Interacts with LigD.</text>
</comment>
<comment type="similarity">
    <text evidence="1">Belongs to the prokaryotic Ku family.</text>
</comment>
<comment type="sequence caution" evidence="3">
    <conflict type="erroneous initiation">
        <sequence resource="EMBL-CDS" id="ACM01718"/>
    </conflict>
    <text>Truncated N-terminus.</text>
</comment>
<name>KU_CERSK</name>
<reference key="1">
    <citation type="journal article" date="2009" name="J. Bacteriol.">
        <title>Complete genome sequence of Rhodobacter sphaeroides KD131.</title>
        <authorList>
            <person name="Lim S.-K."/>
            <person name="Kim S.J."/>
            <person name="Cha S.H."/>
            <person name="Oh Y.-K."/>
            <person name="Rhee H.-J."/>
            <person name="Kim M.-S."/>
            <person name="Lee J.K."/>
        </authorList>
    </citation>
    <scope>NUCLEOTIDE SEQUENCE [LARGE SCALE GENOMIC DNA]</scope>
    <source>
        <strain>KD131 / KCTC 12085</strain>
    </source>
</reference>
<sequence length="267" mass="29472">MPRAIWKGWLAVGQVSCAVALHAAASTSDRVSFHTVNRKTGNRVRREFVDAVSGKPVPREDQVKGYEVAPDEFVQIDPDEIAATIPDSDKCLRIDAFVPCREVDGAYFDKPYYLTPAGDAALEAFALIREGMRARKAAALARTVLFRRLRTVMVRPHGAGLIAHTLNFDYEVRSSAEAFSEIPKLKVKGEMLELAKHIIGTKAGTFDPTAFDDRYDAALAELVKAKLEGRKPKRKAAPKKAREPSDLMAALRESVAATERPRRRKAG</sequence>
<keyword id="KW-0227">DNA damage</keyword>
<keyword id="KW-0233">DNA recombination</keyword>
<keyword id="KW-0234">DNA repair</keyword>
<keyword id="KW-0238">DNA-binding</keyword>
<protein>
    <recommendedName>
        <fullName evidence="1">Non-homologous end joining protein Ku</fullName>
    </recommendedName>
</protein>
<organism>
    <name type="scientific">Cereibacter sphaeroides (strain KD131 / KCTC 12085)</name>
    <name type="common">Rhodobacter sphaeroides</name>
    <dbReference type="NCBI Taxonomy" id="557760"/>
    <lineage>
        <taxon>Bacteria</taxon>
        <taxon>Pseudomonadati</taxon>
        <taxon>Pseudomonadota</taxon>
        <taxon>Alphaproteobacteria</taxon>
        <taxon>Rhodobacterales</taxon>
        <taxon>Paracoccaceae</taxon>
        <taxon>Cereibacter</taxon>
    </lineage>
</organism>
<evidence type="ECO:0000255" key="1">
    <source>
        <dbReference type="HAMAP-Rule" id="MF_01875"/>
    </source>
</evidence>
<evidence type="ECO:0000256" key="2">
    <source>
        <dbReference type="SAM" id="MobiDB-lite"/>
    </source>
</evidence>
<evidence type="ECO:0000305" key="3"/>
<gene>
    <name evidence="1" type="primary">ku</name>
    <name type="ordered locus">RSKD131_1858</name>
</gene>
<accession>B9KKS1</accession>
<dbReference type="EMBL" id="CP001150">
    <property type="protein sequence ID" value="ACM01718.1"/>
    <property type="status" value="ALT_INIT"/>
    <property type="molecule type" value="Genomic_DNA"/>
</dbReference>
<dbReference type="RefSeq" id="WP_041669644.1">
    <property type="nucleotide sequence ID" value="NC_011963.1"/>
</dbReference>
<dbReference type="SMR" id="B9KKS1"/>
<dbReference type="GeneID" id="67447256"/>
<dbReference type="KEGG" id="rsk:RSKD131_1858"/>
<dbReference type="HOGENOM" id="CLU_048975_0_1_5"/>
<dbReference type="GO" id="GO:0003690">
    <property type="term" value="F:double-stranded DNA binding"/>
    <property type="evidence" value="ECO:0007669"/>
    <property type="project" value="UniProtKB-UniRule"/>
</dbReference>
<dbReference type="GO" id="GO:0006310">
    <property type="term" value="P:DNA recombination"/>
    <property type="evidence" value="ECO:0007669"/>
    <property type="project" value="UniProtKB-KW"/>
</dbReference>
<dbReference type="GO" id="GO:0006303">
    <property type="term" value="P:double-strand break repair via nonhomologous end joining"/>
    <property type="evidence" value="ECO:0007669"/>
    <property type="project" value="UniProtKB-UniRule"/>
</dbReference>
<dbReference type="CDD" id="cd00789">
    <property type="entry name" value="KU_like"/>
    <property type="match status" value="1"/>
</dbReference>
<dbReference type="Gene3D" id="2.40.290.10">
    <property type="match status" value="1"/>
</dbReference>
<dbReference type="HAMAP" id="MF_01875">
    <property type="entry name" value="Prokaryotic_Ku"/>
    <property type="match status" value="1"/>
</dbReference>
<dbReference type="InterPro" id="IPR006164">
    <property type="entry name" value="Ku70/Ku80_beta-barrel_dom"/>
</dbReference>
<dbReference type="InterPro" id="IPR009187">
    <property type="entry name" value="Prok_Ku"/>
</dbReference>
<dbReference type="InterPro" id="IPR016194">
    <property type="entry name" value="SPOC-like_C_dom_sf"/>
</dbReference>
<dbReference type="NCBIfam" id="TIGR02772">
    <property type="entry name" value="Ku_bact"/>
    <property type="match status" value="1"/>
</dbReference>
<dbReference type="PANTHER" id="PTHR41251">
    <property type="entry name" value="NON-HOMOLOGOUS END JOINING PROTEIN KU"/>
    <property type="match status" value="1"/>
</dbReference>
<dbReference type="PANTHER" id="PTHR41251:SF1">
    <property type="entry name" value="NON-HOMOLOGOUS END JOINING PROTEIN KU"/>
    <property type="match status" value="1"/>
</dbReference>
<dbReference type="Pfam" id="PF02735">
    <property type="entry name" value="Ku"/>
    <property type="match status" value="1"/>
</dbReference>
<dbReference type="PIRSF" id="PIRSF006493">
    <property type="entry name" value="Prok_Ku"/>
    <property type="match status" value="1"/>
</dbReference>
<dbReference type="SMART" id="SM00559">
    <property type="entry name" value="Ku78"/>
    <property type="match status" value="1"/>
</dbReference>
<dbReference type="SUPFAM" id="SSF100939">
    <property type="entry name" value="SPOC domain-like"/>
    <property type="match status" value="1"/>
</dbReference>
<feature type="chain" id="PRO_0000389194" description="Non-homologous end joining protein Ku">
    <location>
        <begin position="1"/>
        <end position="267"/>
    </location>
</feature>
<feature type="domain" description="Ku" evidence="1">
    <location>
        <begin position="11"/>
        <end position="195"/>
    </location>
</feature>
<feature type="region of interest" description="Disordered" evidence="2">
    <location>
        <begin position="229"/>
        <end position="267"/>
    </location>
</feature>
<proteinExistence type="inferred from homology"/>